<dbReference type="EC" id="3.1.13.-" evidence="1"/>
<dbReference type="EMBL" id="CP000058">
    <property type="protein sequence ID" value="AAZ37049.1"/>
    <property type="molecule type" value="Genomic_DNA"/>
</dbReference>
<dbReference type="RefSeq" id="WP_002554849.1">
    <property type="nucleotide sequence ID" value="NC_005773.3"/>
</dbReference>
<dbReference type="SMR" id="Q48F11"/>
<dbReference type="GeneID" id="61871440"/>
<dbReference type="KEGG" id="psp:PSPPH_3889"/>
<dbReference type="eggNOG" id="COG0847">
    <property type="taxonomic scope" value="Bacteria"/>
</dbReference>
<dbReference type="HOGENOM" id="CLU_082724_0_0_6"/>
<dbReference type="Proteomes" id="UP000000551">
    <property type="component" value="Chromosome"/>
</dbReference>
<dbReference type="GO" id="GO:0005829">
    <property type="term" value="C:cytosol"/>
    <property type="evidence" value="ECO:0007669"/>
    <property type="project" value="TreeGrafter"/>
</dbReference>
<dbReference type="GO" id="GO:0008408">
    <property type="term" value="F:3'-5' exonuclease activity"/>
    <property type="evidence" value="ECO:0007669"/>
    <property type="project" value="TreeGrafter"/>
</dbReference>
<dbReference type="GO" id="GO:0000287">
    <property type="term" value="F:magnesium ion binding"/>
    <property type="evidence" value="ECO:0007669"/>
    <property type="project" value="UniProtKB-UniRule"/>
</dbReference>
<dbReference type="GO" id="GO:0003676">
    <property type="term" value="F:nucleic acid binding"/>
    <property type="evidence" value="ECO:0007669"/>
    <property type="project" value="InterPro"/>
</dbReference>
<dbReference type="GO" id="GO:0016896">
    <property type="term" value="F:RNA exonuclease activity, producing 5'-phosphomonoesters"/>
    <property type="evidence" value="ECO:0007669"/>
    <property type="project" value="UniProtKB-UniRule"/>
</dbReference>
<dbReference type="GO" id="GO:0045004">
    <property type="term" value="P:DNA replication proofreading"/>
    <property type="evidence" value="ECO:0007669"/>
    <property type="project" value="TreeGrafter"/>
</dbReference>
<dbReference type="GO" id="GO:0008033">
    <property type="term" value="P:tRNA processing"/>
    <property type="evidence" value="ECO:0007669"/>
    <property type="project" value="UniProtKB-KW"/>
</dbReference>
<dbReference type="CDD" id="cd06134">
    <property type="entry name" value="RNaseT"/>
    <property type="match status" value="1"/>
</dbReference>
<dbReference type="FunFam" id="3.30.420.10:FF:000009">
    <property type="entry name" value="Ribonuclease T"/>
    <property type="match status" value="1"/>
</dbReference>
<dbReference type="Gene3D" id="3.30.420.10">
    <property type="entry name" value="Ribonuclease H-like superfamily/Ribonuclease H"/>
    <property type="match status" value="1"/>
</dbReference>
<dbReference type="HAMAP" id="MF_00157">
    <property type="entry name" value="RNase_T"/>
    <property type="match status" value="1"/>
</dbReference>
<dbReference type="InterPro" id="IPR013520">
    <property type="entry name" value="Exonuclease_RNaseT/DNA_pol3"/>
</dbReference>
<dbReference type="InterPro" id="IPR005987">
    <property type="entry name" value="RNase_T"/>
</dbReference>
<dbReference type="InterPro" id="IPR012337">
    <property type="entry name" value="RNaseH-like_sf"/>
</dbReference>
<dbReference type="InterPro" id="IPR036397">
    <property type="entry name" value="RNaseH_sf"/>
</dbReference>
<dbReference type="NCBIfam" id="TIGR01298">
    <property type="entry name" value="RNaseT"/>
    <property type="match status" value="1"/>
</dbReference>
<dbReference type="PANTHER" id="PTHR30231">
    <property type="entry name" value="DNA POLYMERASE III SUBUNIT EPSILON"/>
    <property type="match status" value="1"/>
</dbReference>
<dbReference type="PANTHER" id="PTHR30231:SF2">
    <property type="entry name" value="RIBONUCLEASE T"/>
    <property type="match status" value="1"/>
</dbReference>
<dbReference type="Pfam" id="PF00929">
    <property type="entry name" value="RNase_T"/>
    <property type="match status" value="1"/>
</dbReference>
<dbReference type="SMART" id="SM00479">
    <property type="entry name" value="EXOIII"/>
    <property type="match status" value="1"/>
</dbReference>
<dbReference type="SUPFAM" id="SSF53098">
    <property type="entry name" value="Ribonuclease H-like"/>
    <property type="match status" value="1"/>
</dbReference>
<organism>
    <name type="scientific">Pseudomonas savastanoi pv. phaseolicola (strain 1448A / Race 6)</name>
    <name type="common">Pseudomonas syringae pv. phaseolicola (strain 1448A / Race 6)</name>
    <dbReference type="NCBI Taxonomy" id="264730"/>
    <lineage>
        <taxon>Bacteria</taxon>
        <taxon>Pseudomonadati</taxon>
        <taxon>Pseudomonadota</taxon>
        <taxon>Gammaproteobacteria</taxon>
        <taxon>Pseudomonadales</taxon>
        <taxon>Pseudomonadaceae</taxon>
        <taxon>Pseudomonas</taxon>
    </lineage>
</organism>
<gene>
    <name evidence="1" type="primary">rnt</name>
    <name type="ordered locus">PSPPH_3889</name>
</gene>
<proteinExistence type="inferred from homology"/>
<name>RNT_PSE14</name>
<comment type="function">
    <text evidence="1">Trims short 3' overhangs of a variety of RNA species, leaving a one or two nucleotide 3' overhang. Responsible for the end-turnover of tRNA: specifically removes the terminal AMP residue from uncharged tRNA (tRNA-C-C-A). Also appears to be involved in tRNA biosynthesis.</text>
</comment>
<comment type="cofactor">
    <cofactor evidence="1">
        <name>Mg(2+)</name>
        <dbReference type="ChEBI" id="CHEBI:18420"/>
    </cofactor>
    <text evidence="1">Binds two Mg(2+) per subunit. The active form of the enzyme binds two Mg(2+) ions in its active site. The first Mg(2+) forms only one salt bridge with the protein.</text>
</comment>
<comment type="subunit">
    <text evidence="1">Homodimer.</text>
</comment>
<comment type="similarity">
    <text evidence="1">Belongs to the RNase T family.</text>
</comment>
<feature type="chain" id="PRO_1000011402" description="Ribonuclease T">
    <location>
        <begin position="1"/>
        <end position="225"/>
    </location>
</feature>
<feature type="domain" description="Exonuclease" evidence="1">
    <location>
        <begin position="33"/>
        <end position="207"/>
    </location>
</feature>
<feature type="region of interest" description="Disordered" evidence="2">
    <location>
        <begin position="1"/>
        <end position="21"/>
    </location>
</feature>
<feature type="active site" description="Proton donor/acceptor" evidence="1">
    <location>
        <position position="194"/>
    </location>
</feature>
<feature type="binding site" evidence="1">
    <location>
        <position position="36"/>
    </location>
    <ligand>
        <name>Mg(2+)</name>
        <dbReference type="ChEBI" id="CHEBI:18420"/>
        <label>1</label>
        <note>catalytic</note>
    </ligand>
</feature>
<feature type="binding site" evidence="1">
    <location>
        <position position="36"/>
    </location>
    <ligand>
        <name>Mg(2+)</name>
        <dbReference type="ChEBI" id="CHEBI:18420"/>
        <label>2</label>
        <note>catalytic</note>
    </ligand>
</feature>
<feature type="binding site" evidence="1">
    <location>
        <position position="38"/>
    </location>
    <ligand>
        <name>Mg(2+)</name>
        <dbReference type="ChEBI" id="CHEBI:18420"/>
        <label>2</label>
        <note>catalytic</note>
    </ligand>
</feature>
<feature type="binding site" evidence="1">
    <location>
        <position position="194"/>
    </location>
    <ligand>
        <name>Mg(2+)</name>
        <dbReference type="ChEBI" id="CHEBI:18420"/>
        <label>2</label>
        <note>catalytic</note>
    </ligand>
</feature>
<feature type="binding site" evidence="1">
    <location>
        <position position="199"/>
    </location>
    <ligand>
        <name>Mg(2+)</name>
        <dbReference type="ChEBI" id="CHEBI:18420"/>
        <label>2</label>
        <note>catalytic</note>
    </ligand>
</feature>
<feature type="site" description="Important for substrate binding and specificity" evidence="1">
    <location>
        <position position="42"/>
    </location>
</feature>
<feature type="site" description="Important for substrate binding and specificity" evidence="1">
    <location>
        <position position="90"/>
    </location>
</feature>
<feature type="site" description="Important for substrate binding and specificity" evidence="1">
    <location>
        <position position="137"/>
    </location>
</feature>
<feature type="site" description="Important for substrate binding and specificity" evidence="1">
    <location>
        <position position="159"/>
    </location>
</feature>
<sequence>MSEDHFDDEHEGHGGGGGSRHPMAARFRGYLPVVVDVETGGFNSATDALLEIAAVTIGMDERGFVFPEHTYFFRVEPFEGANIEAAALEFTGIKLDHPLRMAVSEETAMNDIFRGVRKALKANGCKRAVLVGHNASFDLGFVNAAVARMDMKRNPFHPFSSFDTATLAGLAYGQTVLAKACQAAGIDFDGREAHSARYDTEKTAELFCGIVNRWKEMGGWEDFDD</sequence>
<accession>Q48F11</accession>
<evidence type="ECO:0000255" key="1">
    <source>
        <dbReference type="HAMAP-Rule" id="MF_00157"/>
    </source>
</evidence>
<evidence type="ECO:0000256" key="2">
    <source>
        <dbReference type="SAM" id="MobiDB-lite"/>
    </source>
</evidence>
<keyword id="KW-0269">Exonuclease</keyword>
<keyword id="KW-0378">Hydrolase</keyword>
<keyword id="KW-0460">Magnesium</keyword>
<keyword id="KW-0479">Metal-binding</keyword>
<keyword id="KW-0540">Nuclease</keyword>
<keyword id="KW-0819">tRNA processing</keyword>
<reference key="1">
    <citation type="journal article" date="2005" name="J. Bacteriol.">
        <title>Whole-genome sequence analysis of Pseudomonas syringae pv. phaseolicola 1448A reveals divergence among pathovars in genes involved in virulence and transposition.</title>
        <authorList>
            <person name="Joardar V."/>
            <person name="Lindeberg M."/>
            <person name="Jackson R.W."/>
            <person name="Selengut J."/>
            <person name="Dodson R."/>
            <person name="Brinkac L.M."/>
            <person name="Daugherty S.C."/>
            <person name="DeBoy R.T."/>
            <person name="Durkin A.S."/>
            <person name="Gwinn Giglio M."/>
            <person name="Madupu R."/>
            <person name="Nelson W.C."/>
            <person name="Rosovitz M.J."/>
            <person name="Sullivan S.A."/>
            <person name="Crabtree J."/>
            <person name="Creasy T."/>
            <person name="Davidsen T.M."/>
            <person name="Haft D.H."/>
            <person name="Zafar N."/>
            <person name="Zhou L."/>
            <person name="Halpin R."/>
            <person name="Holley T."/>
            <person name="Khouri H.M."/>
            <person name="Feldblyum T.V."/>
            <person name="White O."/>
            <person name="Fraser C.M."/>
            <person name="Chatterjee A.K."/>
            <person name="Cartinhour S."/>
            <person name="Schneider D."/>
            <person name="Mansfield J.W."/>
            <person name="Collmer A."/>
            <person name="Buell R."/>
        </authorList>
    </citation>
    <scope>NUCLEOTIDE SEQUENCE [LARGE SCALE GENOMIC DNA]</scope>
    <source>
        <strain>1448A / Race 6</strain>
    </source>
</reference>
<protein>
    <recommendedName>
        <fullName evidence="1">Ribonuclease T</fullName>
        <ecNumber evidence="1">3.1.13.-</ecNumber>
    </recommendedName>
    <alternativeName>
        <fullName evidence="1">Exoribonuclease T</fullName>
        <shortName evidence="1">RNase T</shortName>
    </alternativeName>
</protein>